<feature type="chain" id="PRO_0000405529" description="Outer spore wall protein 5">
    <location>
        <begin position="1"/>
        <end position="148"/>
    </location>
</feature>
<feature type="topological domain" description="Cytoplasmic" evidence="3">
    <location>
        <begin position="1"/>
        <end position="7"/>
    </location>
</feature>
<feature type="transmembrane region" description="Helical" evidence="3">
    <location>
        <begin position="8"/>
        <end position="28"/>
    </location>
</feature>
<feature type="topological domain" description="Extracellular" evidence="3">
    <location>
        <position position="29"/>
    </location>
</feature>
<feature type="transmembrane region" description="Helical" evidence="3">
    <location>
        <begin position="30"/>
        <end position="50"/>
    </location>
</feature>
<feature type="topological domain" description="Cytoplasmic" evidence="3">
    <location>
        <begin position="51"/>
        <end position="148"/>
    </location>
</feature>
<feature type="region of interest" description="Disordered" evidence="4">
    <location>
        <begin position="80"/>
        <end position="110"/>
    </location>
</feature>
<feature type="compositionally biased region" description="Low complexity" evidence="4">
    <location>
        <begin position="80"/>
        <end position="89"/>
    </location>
</feature>
<feature type="compositionally biased region" description="Polar residues" evidence="4">
    <location>
        <begin position="93"/>
        <end position="109"/>
    </location>
</feature>
<feature type="modified residue" description="Phosphoserine" evidence="2">
    <location>
        <position position="102"/>
    </location>
</feature>
<accession>C8ZF05</accession>
<proteinExistence type="inferred from homology"/>
<keyword id="KW-0472">Membrane</keyword>
<keyword id="KW-0597">Phosphoprotein</keyword>
<keyword id="KW-0749">Sporulation</keyword>
<keyword id="KW-0812">Transmembrane</keyword>
<keyword id="KW-1133">Transmembrane helix</keyword>
<evidence type="ECO:0000250" key="1"/>
<evidence type="ECO:0000250" key="2">
    <source>
        <dbReference type="UniProtKB" id="P40219"/>
    </source>
</evidence>
<evidence type="ECO:0000255" key="3"/>
<evidence type="ECO:0000256" key="4">
    <source>
        <dbReference type="SAM" id="MobiDB-lite"/>
    </source>
</evidence>
<evidence type="ECO:0000305" key="5"/>
<sequence length="148" mass="16354">MVSTATFFFFVYLTLFVVIGFFSSLFIIPLLGISFVFAIGVVSFGFCSNMSFKMAQLIYVRADAFLKKVLDKMALQTQPAQLQEPQEPLSTLRPVSNPTIPSPLRQTARPSKFVTEEDVIFEPVSAQSAIARSLETAANKAGNKFQLS</sequence>
<organism>
    <name type="scientific">Saccharomyces cerevisiae (strain Lalvin EC1118 / Prise de mousse)</name>
    <name type="common">Baker's yeast</name>
    <dbReference type="NCBI Taxonomy" id="643680"/>
    <lineage>
        <taxon>Eukaryota</taxon>
        <taxon>Fungi</taxon>
        <taxon>Dikarya</taxon>
        <taxon>Ascomycota</taxon>
        <taxon>Saccharomycotina</taxon>
        <taxon>Saccharomycetes</taxon>
        <taxon>Saccharomycetales</taxon>
        <taxon>Saccharomycetaceae</taxon>
        <taxon>Saccharomyces</taxon>
    </lineage>
</organism>
<protein>
    <recommendedName>
        <fullName>Outer spore wall protein 5</fullName>
    </recommendedName>
</protein>
<reference key="1">
    <citation type="journal article" date="2009" name="Proc. Natl. Acad. Sci. U.S.A.">
        <title>Eukaryote-to-eukaryote gene transfer events revealed by the genome sequence of the wine yeast Saccharomyces cerevisiae EC1118.</title>
        <authorList>
            <person name="Novo M."/>
            <person name="Bigey F."/>
            <person name="Beyne E."/>
            <person name="Galeote V."/>
            <person name="Gavory F."/>
            <person name="Mallet S."/>
            <person name="Cambon B."/>
            <person name="Legras J.-L."/>
            <person name="Wincker P."/>
            <person name="Casaregola S."/>
            <person name="Dequin S."/>
        </authorList>
    </citation>
    <scope>NUCLEOTIDE SEQUENCE [LARGE SCALE GENOMIC DNA]</scope>
    <source>
        <strain>Lalvin EC1118 / Prise de mousse</strain>
    </source>
</reference>
<dbReference type="EMBL" id="FN393082">
    <property type="protein sequence ID" value="CAY81971.1"/>
    <property type="molecule type" value="Genomic_DNA"/>
</dbReference>
<dbReference type="SMR" id="C8ZF05"/>
<dbReference type="HOGENOM" id="CLU_147574_0_0_1"/>
<dbReference type="OrthoDB" id="41863at4893"/>
<dbReference type="Proteomes" id="UP000000286">
    <property type="component" value="Chromosome XIII, Scaffold EC1118_1M3"/>
</dbReference>
<dbReference type="GO" id="GO:0016020">
    <property type="term" value="C:membrane"/>
    <property type="evidence" value="ECO:0007669"/>
    <property type="project" value="UniProtKB-SubCell"/>
</dbReference>
<dbReference type="GO" id="GO:0030435">
    <property type="term" value="P:sporulation resulting in formation of a cellular spore"/>
    <property type="evidence" value="ECO:0007669"/>
    <property type="project" value="UniProtKB-KW"/>
</dbReference>
<dbReference type="InterPro" id="IPR031430">
    <property type="entry name" value="Osw5"/>
</dbReference>
<dbReference type="Pfam" id="PF17062">
    <property type="entry name" value="Osw5"/>
    <property type="match status" value="1"/>
</dbReference>
<gene>
    <name type="primary">OSW5</name>
    <name type="ORF">EC1118_1M3_3290g</name>
</gene>
<comment type="function">
    <text evidence="1">Involved in spore wall assembly.</text>
</comment>
<comment type="subcellular location">
    <subcellularLocation>
        <location evidence="1">Membrane</location>
        <topology evidence="1">Multi-pass membrane protein</topology>
    </subcellularLocation>
</comment>
<comment type="similarity">
    <text evidence="5">Belongs to the OSW5 family.</text>
</comment>
<name>OSW5_YEAS8</name>